<name>PFA5_YEAST</name>
<gene>
    <name type="primary">PFA5</name>
    <name type="ordered locus">YDR459C</name>
</gene>
<accession>Q03289</accession>
<accession>D6VT83</accession>
<dbReference type="EC" id="2.3.1.225"/>
<dbReference type="EMBL" id="U33050">
    <property type="protein sequence ID" value="AAB64921.1"/>
    <property type="molecule type" value="Genomic_DNA"/>
</dbReference>
<dbReference type="EMBL" id="BK006938">
    <property type="protein sequence ID" value="DAA12293.1"/>
    <property type="molecule type" value="Genomic_DNA"/>
</dbReference>
<dbReference type="PIR" id="S69627">
    <property type="entry name" value="S69627"/>
</dbReference>
<dbReference type="RefSeq" id="NP_010747.1">
    <property type="nucleotide sequence ID" value="NM_001180767.1"/>
</dbReference>
<dbReference type="BioGRID" id="32513">
    <property type="interactions" value="50"/>
</dbReference>
<dbReference type="DIP" id="DIP-5400N"/>
<dbReference type="FunCoup" id="Q03289">
    <property type="interactions" value="1111"/>
</dbReference>
<dbReference type="IntAct" id="Q03289">
    <property type="interactions" value="1"/>
</dbReference>
<dbReference type="STRING" id="4932.YDR459C"/>
<dbReference type="iPTMnet" id="Q03289"/>
<dbReference type="PaxDb" id="4932-YDR459C"/>
<dbReference type="PeptideAtlas" id="Q03289"/>
<dbReference type="DNASU" id="852070"/>
<dbReference type="EnsemblFungi" id="YDR459C_mRNA">
    <property type="protein sequence ID" value="YDR459C"/>
    <property type="gene ID" value="YDR459C"/>
</dbReference>
<dbReference type="GeneID" id="852070"/>
<dbReference type="KEGG" id="sce:YDR459C"/>
<dbReference type="AGR" id="SGD:S000002867"/>
<dbReference type="SGD" id="S000002867">
    <property type="gene designation" value="PFA5"/>
</dbReference>
<dbReference type="VEuPathDB" id="FungiDB:YDR459C"/>
<dbReference type="eggNOG" id="KOG1311">
    <property type="taxonomic scope" value="Eukaryota"/>
</dbReference>
<dbReference type="HOGENOM" id="CLU_064801_0_0_1"/>
<dbReference type="InParanoid" id="Q03289"/>
<dbReference type="OMA" id="YCVWIGT"/>
<dbReference type="OrthoDB" id="331948at2759"/>
<dbReference type="BioCyc" id="YEAST:G3O-29987-MONOMER"/>
<dbReference type="BRENDA" id="2.3.1.225">
    <property type="organism ID" value="984"/>
</dbReference>
<dbReference type="BioGRID-ORCS" id="852070">
    <property type="hits" value="1 hit in 10 CRISPR screens"/>
</dbReference>
<dbReference type="PRO" id="PR:Q03289"/>
<dbReference type="Proteomes" id="UP000002311">
    <property type="component" value="Chromosome IV"/>
</dbReference>
<dbReference type="RNAct" id="Q03289">
    <property type="molecule type" value="protein"/>
</dbReference>
<dbReference type="GO" id="GO:0071944">
    <property type="term" value="C:cell periphery"/>
    <property type="evidence" value="ECO:0007005"/>
    <property type="project" value="SGD"/>
</dbReference>
<dbReference type="GO" id="GO:0005783">
    <property type="term" value="C:endoplasmic reticulum"/>
    <property type="evidence" value="ECO:0000318"/>
    <property type="project" value="GO_Central"/>
</dbReference>
<dbReference type="GO" id="GO:0005794">
    <property type="term" value="C:Golgi apparatus"/>
    <property type="evidence" value="ECO:0000318"/>
    <property type="project" value="GO_Central"/>
</dbReference>
<dbReference type="GO" id="GO:0005886">
    <property type="term" value="C:plasma membrane"/>
    <property type="evidence" value="ECO:0000314"/>
    <property type="project" value="SGD"/>
</dbReference>
<dbReference type="GO" id="GO:0016409">
    <property type="term" value="F:palmitoyltransferase activity"/>
    <property type="evidence" value="ECO:0000314"/>
    <property type="project" value="UniProtKB"/>
</dbReference>
<dbReference type="GO" id="GO:0019706">
    <property type="term" value="F:protein-cysteine S-palmitoyltransferase activity"/>
    <property type="evidence" value="ECO:0000318"/>
    <property type="project" value="GO_Central"/>
</dbReference>
<dbReference type="GO" id="GO:0018345">
    <property type="term" value="P:protein palmitoylation"/>
    <property type="evidence" value="ECO:0000314"/>
    <property type="project" value="UniProtKB"/>
</dbReference>
<dbReference type="GO" id="GO:0006612">
    <property type="term" value="P:protein targeting to membrane"/>
    <property type="evidence" value="ECO:0000318"/>
    <property type="project" value="GO_Central"/>
</dbReference>
<dbReference type="InterPro" id="IPR001594">
    <property type="entry name" value="Palmitoyltrfase_DHHC"/>
</dbReference>
<dbReference type="InterPro" id="IPR039859">
    <property type="entry name" value="PFA4/ZDH16/20/ERF2-like"/>
</dbReference>
<dbReference type="PANTHER" id="PTHR22883:SF23">
    <property type="entry name" value="PALMITOYLTRANSFERASE ZDHHC6"/>
    <property type="match status" value="1"/>
</dbReference>
<dbReference type="PANTHER" id="PTHR22883">
    <property type="entry name" value="ZINC FINGER DHHC DOMAIN CONTAINING PROTEIN"/>
    <property type="match status" value="1"/>
</dbReference>
<dbReference type="Pfam" id="PF01529">
    <property type="entry name" value="DHHC"/>
    <property type="match status" value="1"/>
</dbReference>
<dbReference type="PROSITE" id="PS50216">
    <property type="entry name" value="DHHC"/>
    <property type="match status" value="1"/>
</dbReference>
<organism>
    <name type="scientific">Saccharomyces cerevisiae (strain ATCC 204508 / S288c)</name>
    <name type="common">Baker's yeast</name>
    <dbReference type="NCBI Taxonomy" id="559292"/>
    <lineage>
        <taxon>Eukaryota</taxon>
        <taxon>Fungi</taxon>
        <taxon>Dikarya</taxon>
        <taxon>Ascomycota</taxon>
        <taxon>Saccharomycotina</taxon>
        <taxon>Saccharomycetes</taxon>
        <taxon>Saccharomycetales</taxon>
        <taxon>Saccharomycetaceae</taxon>
        <taxon>Saccharomyces</taxon>
    </lineage>
</organism>
<comment type="catalytic activity">
    <reaction>
        <text>L-cysteinyl-[protein] + hexadecanoyl-CoA = S-hexadecanoyl-L-cysteinyl-[protein] + CoA</text>
        <dbReference type="Rhea" id="RHEA:36683"/>
        <dbReference type="Rhea" id="RHEA-COMP:10131"/>
        <dbReference type="Rhea" id="RHEA-COMP:11032"/>
        <dbReference type="ChEBI" id="CHEBI:29950"/>
        <dbReference type="ChEBI" id="CHEBI:57287"/>
        <dbReference type="ChEBI" id="CHEBI:57379"/>
        <dbReference type="ChEBI" id="CHEBI:74151"/>
        <dbReference type="EC" id="2.3.1.225"/>
    </reaction>
</comment>
<comment type="subcellular location">
    <subcellularLocation>
        <location>Membrane</location>
        <topology>Multi-pass membrane protein</topology>
    </subcellularLocation>
</comment>
<comment type="domain">
    <text evidence="1">The DHHC domain is required for palmitoyltransferase activity.</text>
</comment>
<comment type="PTM">
    <text>Autopalmitoylated.</text>
</comment>
<comment type="similarity">
    <text evidence="4">Belongs to the DHHC palmitoyltransferase family. PFA5 subfamily.</text>
</comment>
<sequence length="374" mass="42923">MALSWNIRIRRRSWFRFILPIIVLGLLCYGTWAYCHKLCYEQVDKRLRQKSVSVGLICAVCFLDVVVIFIWLQIVILVGPGTQPHVAPFLILPIASEEKTSNTSQNTSVEYDAVVPPKCYQSDPHGYPIWCSECQSLKMERTHHSSELGHCIPRFDHYCMWIGTVIGRDNYRLFVQFAAYFSTLLLIMWVSICVYIRIITQHNHNYSPNLNANIISTLVFAILGWLLTASLLASSIFYMSQNKTSLEAIIDSKRKKFGTRKIFCYYSEANKLRFVVEFDRSEFHSFWDKKSILANIKDFMGSNILMWIIPLGKPYTSRCKSDGKSGSKTTLVEILGPYEETLSDYTIQAIEDKISRGEYLATLRASGDDSDPAY</sequence>
<keyword id="KW-0012">Acyltransferase</keyword>
<keyword id="KW-0449">Lipoprotein</keyword>
<keyword id="KW-0472">Membrane</keyword>
<keyword id="KW-0564">Palmitate</keyword>
<keyword id="KW-1185">Reference proteome</keyword>
<keyword id="KW-0808">Transferase</keyword>
<keyword id="KW-0812">Transmembrane</keyword>
<keyword id="KW-1133">Transmembrane helix</keyword>
<proteinExistence type="evidence at protein level"/>
<protein>
    <recommendedName>
        <fullName>Palmitoyltransferase PFA5</fullName>
        <ecNumber>2.3.1.225</ecNumber>
    </recommendedName>
    <alternativeName>
        <fullName>Protein fatty acyltransferase 5</fullName>
    </alternativeName>
</protein>
<feature type="chain" id="PRO_0000212983" description="Palmitoyltransferase PFA5">
    <location>
        <begin position="1"/>
        <end position="374"/>
    </location>
</feature>
<feature type="topological domain" description="Cytoplasmic" evidence="2">
    <location>
        <begin position="1"/>
        <end position="13"/>
    </location>
</feature>
<feature type="transmembrane region" description="Helical" evidence="2">
    <location>
        <begin position="14"/>
        <end position="34"/>
    </location>
</feature>
<feature type="topological domain" description="Lumenal" evidence="2">
    <location>
        <begin position="35"/>
        <end position="55"/>
    </location>
</feature>
<feature type="transmembrane region" description="Helical" evidence="2">
    <location>
        <begin position="56"/>
        <end position="76"/>
    </location>
</feature>
<feature type="topological domain" description="Cytoplasmic" evidence="2">
    <location>
        <begin position="77"/>
        <end position="173"/>
    </location>
</feature>
<feature type="transmembrane region" description="Helical" evidence="2">
    <location>
        <begin position="174"/>
        <end position="194"/>
    </location>
</feature>
<feature type="topological domain" description="Lumenal" evidence="2">
    <location>
        <begin position="195"/>
        <end position="217"/>
    </location>
</feature>
<feature type="transmembrane region" description="Helical" evidence="2">
    <location>
        <begin position="218"/>
        <end position="238"/>
    </location>
</feature>
<feature type="topological domain" description="Cytoplasmic" evidence="2">
    <location>
        <begin position="239"/>
        <end position="374"/>
    </location>
</feature>
<feature type="domain" description="DHHC" evidence="3">
    <location>
        <begin position="129"/>
        <end position="179"/>
    </location>
</feature>
<evidence type="ECO:0000250" key="1"/>
<evidence type="ECO:0000255" key="2"/>
<evidence type="ECO:0000255" key="3">
    <source>
        <dbReference type="PROSITE-ProRule" id="PRU00067"/>
    </source>
</evidence>
<evidence type="ECO:0000305" key="4"/>
<reference key="1">
    <citation type="journal article" date="1997" name="Nature">
        <title>The nucleotide sequence of Saccharomyces cerevisiae chromosome IV.</title>
        <authorList>
            <person name="Jacq C."/>
            <person name="Alt-Moerbe J."/>
            <person name="Andre B."/>
            <person name="Arnold W."/>
            <person name="Bahr A."/>
            <person name="Ballesta J.P.G."/>
            <person name="Bargues M."/>
            <person name="Baron L."/>
            <person name="Becker A."/>
            <person name="Biteau N."/>
            <person name="Bloecker H."/>
            <person name="Blugeon C."/>
            <person name="Boskovic J."/>
            <person name="Brandt P."/>
            <person name="Brueckner M."/>
            <person name="Buitrago M.J."/>
            <person name="Coster F."/>
            <person name="Delaveau T."/>
            <person name="del Rey F."/>
            <person name="Dujon B."/>
            <person name="Eide L.G."/>
            <person name="Garcia-Cantalejo J.M."/>
            <person name="Goffeau A."/>
            <person name="Gomez-Peris A."/>
            <person name="Granotier C."/>
            <person name="Hanemann V."/>
            <person name="Hankeln T."/>
            <person name="Hoheisel J.D."/>
            <person name="Jaeger W."/>
            <person name="Jimenez A."/>
            <person name="Jonniaux J.-L."/>
            <person name="Kraemer C."/>
            <person name="Kuester H."/>
            <person name="Laamanen P."/>
            <person name="Legros Y."/>
            <person name="Louis E.J."/>
            <person name="Moeller-Rieker S."/>
            <person name="Monnet A."/>
            <person name="Moro M."/>
            <person name="Mueller-Auer S."/>
            <person name="Nussbaumer B."/>
            <person name="Paricio N."/>
            <person name="Paulin L."/>
            <person name="Perea J."/>
            <person name="Perez-Alonso M."/>
            <person name="Perez-Ortin J.E."/>
            <person name="Pohl T.M."/>
            <person name="Prydz H."/>
            <person name="Purnelle B."/>
            <person name="Rasmussen S.W."/>
            <person name="Remacha M.A."/>
            <person name="Revuelta J.L."/>
            <person name="Rieger M."/>
            <person name="Salom D."/>
            <person name="Saluz H.P."/>
            <person name="Saiz J.E."/>
            <person name="Saren A.-M."/>
            <person name="Schaefer M."/>
            <person name="Scharfe M."/>
            <person name="Schmidt E.R."/>
            <person name="Schneider C."/>
            <person name="Scholler P."/>
            <person name="Schwarz S."/>
            <person name="Soler-Mira A."/>
            <person name="Urrestarazu L.A."/>
            <person name="Verhasselt P."/>
            <person name="Vissers S."/>
            <person name="Voet M."/>
            <person name="Volckaert G."/>
            <person name="Wagner G."/>
            <person name="Wambutt R."/>
            <person name="Wedler E."/>
            <person name="Wedler H."/>
            <person name="Woelfl S."/>
            <person name="Harris D.E."/>
            <person name="Bowman S."/>
            <person name="Brown D."/>
            <person name="Churcher C.M."/>
            <person name="Connor R."/>
            <person name="Dedman K."/>
            <person name="Gentles S."/>
            <person name="Hamlin N."/>
            <person name="Hunt S."/>
            <person name="Jones L."/>
            <person name="McDonald S."/>
            <person name="Murphy L.D."/>
            <person name="Niblett D."/>
            <person name="Odell C."/>
            <person name="Oliver K."/>
            <person name="Rajandream M.A."/>
            <person name="Richards C."/>
            <person name="Shore L."/>
            <person name="Walsh S.V."/>
            <person name="Barrell B.G."/>
            <person name="Dietrich F.S."/>
            <person name="Mulligan J.T."/>
            <person name="Allen E."/>
            <person name="Araujo R."/>
            <person name="Aviles E."/>
            <person name="Berno A."/>
            <person name="Carpenter J."/>
            <person name="Chen E."/>
            <person name="Cherry J.M."/>
            <person name="Chung E."/>
            <person name="Duncan M."/>
            <person name="Hunicke-Smith S."/>
            <person name="Hyman R.W."/>
            <person name="Komp C."/>
            <person name="Lashkari D."/>
            <person name="Lew H."/>
            <person name="Lin D."/>
            <person name="Mosedale D."/>
            <person name="Nakahara K."/>
            <person name="Namath A."/>
            <person name="Oefner P."/>
            <person name="Oh C."/>
            <person name="Petel F.X."/>
            <person name="Roberts D."/>
            <person name="Schramm S."/>
            <person name="Schroeder M."/>
            <person name="Shogren T."/>
            <person name="Shroff N."/>
            <person name="Winant A."/>
            <person name="Yelton M.A."/>
            <person name="Botstein D."/>
            <person name="Davis R.W."/>
            <person name="Johnston M."/>
            <person name="Andrews S."/>
            <person name="Brinkman R."/>
            <person name="Cooper J."/>
            <person name="Ding H."/>
            <person name="Du Z."/>
            <person name="Favello A."/>
            <person name="Fulton L."/>
            <person name="Gattung S."/>
            <person name="Greco T."/>
            <person name="Hallsworth K."/>
            <person name="Hawkins J."/>
            <person name="Hillier L.W."/>
            <person name="Jier M."/>
            <person name="Johnson D."/>
            <person name="Johnston L."/>
            <person name="Kirsten J."/>
            <person name="Kucaba T."/>
            <person name="Langston Y."/>
            <person name="Latreille P."/>
            <person name="Le T."/>
            <person name="Mardis E."/>
            <person name="Menezes S."/>
            <person name="Miller N."/>
            <person name="Nhan M."/>
            <person name="Pauley A."/>
            <person name="Peluso D."/>
            <person name="Rifkin L."/>
            <person name="Riles L."/>
            <person name="Taich A."/>
            <person name="Trevaskis E."/>
            <person name="Vignati D."/>
            <person name="Wilcox L."/>
            <person name="Wohldman P."/>
            <person name="Vaudin M."/>
            <person name="Wilson R."/>
            <person name="Waterston R."/>
            <person name="Albermann K."/>
            <person name="Hani J."/>
            <person name="Heumann K."/>
            <person name="Kleine K."/>
            <person name="Mewes H.-W."/>
            <person name="Zollner A."/>
            <person name="Zaccaria P."/>
        </authorList>
    </citation>
    <scope>NUCLEOTIDE SEQUENCE [LARGE SCALE GENOMIC DNA]</scope>
    <source>
        <strain>ATCC 204508 / S288c</strain>
    </source>
</reference>
<reference key="2">
    <citation type="journal article" date="2014" name="G3 (Bethesda)">
        <title>The reference genome sequence of Saccharomyces cerevisiae: Then and now.</title>
        <authorList>
            <person name="Engel S.R."/>
            <person name="Dietrich F.S."/>
            <person name="Fisk D.G."/>
            <person name="Binkley G."/>
            <person name="Balakrishnan R."/>
            <person name="Costanzo M.C."/>
            <person name="Dwight S.S."/>
            <person name="Hitz B.C."/>
            <person name="Karra K."/>
            <person name="Nash R.S."/>
            <person name="Weng S."/>
            <person name="Wong E.D."/>
            <person name="Lloyd P."/>
            <person name="Skrzypek M.S."/>
            <person name="Miyasato S.R."/>
            <person name="Simison M."/>
            <person name="Cherry J.M."/>
        </authorList>
    </citation>
    <scope>GENOME REANNOTATION</scope>
    <source>
        <strain>ATCC 204508 / S288c</strain>
    </source>
</reference>
<reference key="3">
    <citation type="journal article" date="2005" name="J. Cell Biol.">
        <title>The vacuolar DHHC-CRD protein Pfa3p is a protein acyltransferase for Vac8p.</title>
        <authorList>
            <person name="Smotrys J.E."/>
            <person name="Schoenfish M.J."/>
            <person name="Stutz M.A."/>
            <person name="Linder M.E."/>
        </authorList>
    </citation>
    <scope>AUTOPALMITOYLATION</scope>
</reference>
<reference key="4">
    <citation type="journal article" date="2006" name="Proc. Natl. Acad. Sci. U.S.A.">
        <title>A global topology map of the Saccharomyces cerevisiae membrane proteome.</title>
        <authorList>
            <person name="Kim H."/>
            <person name="Melen K."/>
            <person name="Oesterberg M."/>
            <person name="von Heijne G."/>
        </authorList>
    </citation>
    <scope>TOPOLOGY [LARGE SCALE ANALYSIS]</scope>
    <source>
        <strain>ATCC 208353 / W303-1A</strain>
    </source>
</reference>